<sequence>MSKSLQAIRGMNDILPEQTPAWRYLESTLVSLLDGYGYKEIRLPIVEYTELFARGIGEGTDVVDKEMYTFLDRNEESLTLRPEGTAGCVRAVLEHGLAGGGQVQKLWYAGPMFRYEKPQKGRYRQFHQVGVEAFNLPGPDVDAELIVLTWRLWKKLGLADAVTLQLNSLGSSEARAAYRDALVAYLQERFDQLDEDSQRRLTTNPLRILDSKNEATQAVLVGAPTLGDYLDEESRLHFEGVKARLDAAGIRYQINHKLVRGLDYYNRTVFEWVTDKLGAQGTVCAGGRYDGLVAQLGGKATPGVGFAMGVERLVLLLETLDLLPAELNRAADVYVCAFGEAAELAALTLTERLRDELPGLRLLLNSGGGSFKSQFKKADKSGARYALILGDDELAGRVVGCKPLRDDSEQQSVAWDALAEHLAACQQA</sequence>
<reference key="1">
    <citation type="submission" date="2007-04" db="EMBL/GenBank/DDBJ databases">
        <title>Complete sequence of Pseudomonas mendocina ymp.</title>
        <authorList>
            <consortium name="US DOE Joint Genome Institute"/>
            <person name="Copeland A."/>
            <person name="Lucas S."/>
            <person name="Lapidus A."/>
            <person name="Barry K."/>
            <person name="Glavina del Rio T."/>
            <person name="Dalin E."/>
            <person name="Tice H."/>
            <person name="Pitluck S."/>
            <person name="Kiss H."/>
            <person name="Brettin T."/>
            <person name="Detter J.C."/>
            <person name="Bruce D."/>
            <person name="Han C."/>
            <person name="Schmutz J."/>
            <person name="Larimer F."/>
            <person name="Land M."/>
            <person name="Hauser L."/>
            <person name="Kyrpides N."/>
            <person name="Mikhailova N."/>
            <person name="Hersman L."/>
            <person name="Dubois J."/>
            <person name="Maurice P."/>
            <person name="Richardson P."/>
        </authorList>
    </citation>
    <scope>NUCLEOTIDE SEQUENCE [LARGE SCALE GENOMIC DNA]</scope>
    <source>
        <strain>ymp</strain>
    </source>
</reference>
<proteinExistence type="inferred from homology"/>
<dbReference type="EC" id="6.1.1.21" evidence="1"/>
<dbReference type="EMBL" id="CP000680">
    <property type="protein sequence ID" value="ABP86247.1"/>
    <property type="molecule type" value="Genomic_DNA"/>
</dbReference>
<dbReference type="SMR" id="A4XY31"/>
<dbReference type="STRING" id="399739.Pmen_3499"/>
<dbReference type="KEGG" id="pmy:Pmen_3499"/>
<dbReference type="PATRIC" id="fig|399739.8.peg.3545"/>
<dbReference type="eggNOG" id="COG0124">
    <property type="taxonomic scope" value="Bacteria"/>
</dbReference>
<dbReference type="HOGENOM" id="CLU_025113_1_0_6"/>
<dbReference type="OrthoDB" id="9800814at2"/>
<dbReference type="GO" id="GO:0005737">
    <property type="term" value="C:cytoplasm"/>
    <property type="evidence" value="ECO:0007669"/>
    <property type="project" value="UniProtKB-SubCell"/>
</dbReference>
<dbReference type="GO" id="GO:0005524">
    <property type="term" value="F:ATP binding"/>
    <property type="evidence" value="ECO:0007669"/>
    <property type="project" value="UniProtKB-UniRule"/>
</dbReference>
<dbReference type="GO" id="GO:0004821">
    <property type="term" value="F:histidine-tRNA ligase activity"/>
    <property type="evidence" value="ECO:0007669"/>
    <property type="project" value="UniProtKB-UniRule"/>
</dbReference>
<dbReference type="GO" id="GO:0006427">
    <property type="term" value="P:histidyl-tRNA aminoacylation"/>
    <property type="evidence" value="ECO:0007669"/>
    <property type="project" value="UniProtKB-UniRule"/>
</dbReference>
<dbReference type="CDD" id="cd00773">
    <property type="entry name" value="HisRS-like_core"/>
    <property type="match status" value="1"/>
</dbReference>
<dbReference type="CDD" id="cd00859">
    <property type="entry name" value="HisRS_anticodon"/>
    <property type="match status" value="1"/>
</dbReference>
<dbReference type="FunFam" id="3.30.930.10:FF:000005">
    <property type="entry name" value="Histidine--tRNA ligase"/>
    <property type="match status" value="1"/>
</dbReference>
<dbReference type="Gene3D" id="3.40.50.800">
    <property type="entry name" value="Anticodon-binding domain"/>
    <property type="match status" value="1"/>
</dbReference>
<dbReference type="Gene3D" id="3.30.930.10">
    <property type="entry name" value="Bira Bifunctional Protein, Domain 2"/>
    <property type="match status" value="1"/>
</dbReference>
<dbReference type="HAMAP" id="MF_00127">
    <property type="entry name" value="His_tRNA_synth"/>
    <property type="match status" value="1"/>
</dbReference>
<dbReference type="InterPro" id="IPR006195">
    <property type="entry name" value="aa-tRNA-synth_II"/>
</dbReference>
<dbReference type="InterPro" id="IPR045864">
    <property type="entry name" value="aa-tRNA-synth_II/BPL/LPL"/>
</dbReference>
<dbReference type="InterPro" id="IPR004154">
    <property type="entry name" value="Anticodon-bd"/>
</dbReference>
<dbReference type="InterPro" id="IPR036621">
    <property type="entry name" value="Anticodon-bd_dom_sf"/>
</dbReference>
<dbReference type="InterPro" id="IPR015807">
    <property type="entry name" value="His-tRNA-ligase"/>
</dbReference>
<dbReference type="InterPro" id="IPR041715">
    <property type="entry name" value="HisRS-like_core"/>
</dbReference>
<dbReference type="InterPro" id="IPR004516">
    <property type="entry name" value="HisRS/HisZ"/>
</dbReference>
<dbReference type="InterPro" id="IPR033656">
    <property type="entry name" value="HisRS_anticodon"/>
</dbReference>
<dbReference type="NCBIfam" id="TIGR00442">
    <property type="entry name" value="hisS"/>
    <property type="match status" value="1"/>
</dbReference>
<dbReference type="PANTHER" id="PTHR43707:SF1">
    <property type="entry name" value="HISTIDINE--TRNA LIGASE, MITOCHONDRIAL-RELATED"/>
    <property type="match status" value="1"/>
</dbReference>
<dbReference type="PANTHER" id="PTHR43707">
    <property type="entry name" value="HISTIDYL-TRNA SYNTHETASE"/>
    <property type="match status" value="1"/>
</dbReference>
<dbReference type="Pfam" id="PF03129">
    <property type="entry name" value="HGTP_anticodon"/>
    <property type="match status" value="1"/>
</dbReference>
<dbReference type="Pfam" id="PF13393">
    <property type="entry name" value="tRNA-synt_His"/>
    <property type="match status" value="1"/>
</dbReference>
<dbReference type="PIRSF" id="PIRSF001549">
    <property type="entry name" value="His-tRNA_synth"/>
    <property type="match status" value="1"/>
</dbReference>
<dbReference type="SUPFAM" id="SSF52954">
    <property type="entry name" value="Class II aaRS ABD-related"/>
    <property type="match status" value="1"/>
</dbReference>
<dbReference type="SUPFAM" id="SSF55681">
    <property type="entry name" value="Class II aaRS and biotin synthetases"/>
    <property type="match status" value="1"/>
</dbReference>
<dbReference type="PROSITE" id="PS50862">
    <property type="entry name" value="AA_TRNA_LIGASE_II"/>
    <property type="match status" value="1"/>
</dbReference>
<name>SYH_ECTM1</name>
<protein>
    <recommendedName>
        <fullName evidence="1">Histidine--tRNA ligase</fullName>
        <ecNumber evidence="1">6.1.1.21</ecNumber>
    </recommendedName>
    <alternativeName>
        <fullName evidence="1">Histidyl-tRNA synthetase</fullName>
        <shortName evidence="1">HisRS</shortName>
    </alternativeName>
</protein>
<evidence type="ECO:0000255" key="1">
    <source>
        <dbReference type="HAMAP-Rule" id="MF_00127"/>
    </source>
</evidence>
<feature type="chain" id="PRO_1000016421" description="Histidine--tRNA ligase">
    <location>
        <begin position="1"/>
        <end position="428"/>
    </location>
</feature>
<organism>
    <name type="scientific">Ectopseudomonas mendocina (strain ymp)</name>
    <name type="common">Pseudomonas mendocina</name>
    <dbReference type="NCBI Taxonomy" id="399739"/>
    <lineage>
        <taxon>Bacteria</taxon>
        <taxon>Pseudomonadati</taxon>
        <taxon>Pseudomonadota</taxon>
        <taxon>Gammaproteobacteria</taxon>
        <taxon>Pseudomonadales</taxon>
        <taxon>Pseudomonadaceae</taxon>
        <taxon>Ectopseudomonas</taxon>
    </lineage>
</organism>
<comment type="catalytic activity">
    <reaction evidence="1">
        <text>tRNA(His) + L-histidine + ATP = L-histidyl-tRNA(His) + AMP + diphosphate + H(+)</text>
        <dbReference type="Rhea" id="RHEA:17313"/>
        <dbReference type="Rhea" id="RHEA-COMP:9665"/>
        <dbReference type="Rhea" id="RHEA-COMP:9689"/>
        <dbReference type="ChEBI" id="CHEBI:15378"/>
        <dbReference type="ChEBI" id="CHEBI:30616"/>
        <dbReference type="ChEBI" id="CHEBI:33019"/>
        <dbReference type="ChEBI" id="CHEBI:57595"/>
        <dbReference type="ChEBI" id="CHEBI:78442"/>
        <dbReference type="ChEBI" id="CHEBI:78527"/>
        <dbReference type="ChEBI" id="CHEBI:456215"/>
        <dbReference type="EC" id="6.1.1.21"/>
    </reaction>
</comment>
<comment type="subunit">
    <text evidence="1">Homodimer.</text>
</comment>
<comment type="subcellular location">
    <subcellularLocation>
        <location evidence="1">Cytoplasm</location>
    </subcellularLocation>
</comment>
<comment type="similarity">
    <text evidence="1">Belongs to the class-II aminoacyl-tRNA synthetase family.</text>
</comment>
<gene>
    <name evidence="1" type="primary">hisS</name>
    <name type="ordered locus">Pmen_3499</name>
</gene>
<keyword id="KW-0030">Aminoacyl-tRNA synthetase</keyword>
<keyword id="KW-0067">ATP-binding</keyword>
<keyword id="KW-0963">Cytoplasm</keyword>
<keyword id="KW-0436">Ligase</keyword>
<keyword id="KW-0547">Nucleotide-binding</keyword>
<keyword id="KW-0648">Protein biosynthesis</keyword>
<accession>A4XY31</accession>